<dbReference type="EC" id="1.97.1.12" evidence="1"/>
<dbReference type="EMBL" id="AF180011">
    <property type="protein sequence ID" value="AAF29812.1"/>
    <property type="molecule type" value="Genomic_DNA"/>
</dbReference>
<dbReference type="SMR" id="Q9MUK4"/>
<dbReference type="GO" id="GO:0009535">
    <property type="term" value="C:chloroplast thylakoid membrane"/>
    <property type="evidence" value="ECO:0007669"/>
    <property type="project" value="UniProtKB-SubCell"/>
</dbReference>
<dbReference type="GO" id="GO:0009522">
    <property type="term" value="C:photosystem I"/>
    <property type="evidence" value="ECO:0007669"/>
    <property type="project" value="UniProtKB-KW"/>
</dbReference>
<dbReference type="GO" id="GO:0051539">
    <property type="term" value="F:4 iron, 4 sulfur cluster binding"/>
    <property type="evidence" value="ECO:0007669"/>
    <property type="project" value="UniProtKB-KW"/>
</dbReference>
<dbReference type="GO" id="GO:0016168">
    <property type="term" value="F:chlorophyll binding"/>
    <property type="evidence" value="ECO:0007669"/>
    <property type="project" value="UniProtKB-KW"/>
</dbReference>
<dbReference type="GO" id="GO:0046872">
    <property type="term" value="F:metal ion binding"/>
    <property type="evidence" value="ECO:0007669"/>
    <property type="project" value="UniProtKB-KW"/>
</dbReference>
<dbReference type="GO" id="GO:0016491">
    <property type="term" value="F:oxidoreductase activity"/>
    <property type="evidence" value="ECO:0007669"/>
    <property type="project" value="UniProtKB-KW"/>
</dbReference>
<dbReference type="GO" id="GO:0015979">
    <property type="term" value="P:photosynthesis"/>
    <property type="evidence" value="ECO:0007669"/>
    <property type="project" value="UniProtKB-KW"/>
</dbReference>
<dbReference type="FunFam" id="1.20.1130.10:FF:000001">
    <property type="entry name" value="Photosystem I P700 chlorophyll a apoprotein A2"/>
    <property type="match status" value="1"/>
</dbReference>
<dbReference type="Gene3D" id="1.20.1130.10">
    <property type="entry name" value="Photosystem I PsaA/PsaB"/>
    <property type="match status" value="1"/>
</dbReference>
<dbReference type="HAMAP" id="MF_00458">
    <property type="entry name" value="PSI_PsaA"/>
    <property type="match status" value="1"/>
</dbReference>
<dbReference type="InterPro" id="IPR006243">
    <property type="entry name" value="PSI_PsaA"/>
</dbReference>
<dbReference type="InterPro" id="IPR001280">
    <property type="entry name" value="PSI_PsaA/B"/>
</dbReference>
<dbReference type="InterPro" id="IPR020586">
    <property type="entry name" value="PSI_PsaA/B_CS"/>
</dbReference>
<dbReference type="InterPro" id="IPR036408">
    <property type="entry name" value="PSI_PsaA/B_sf"/>
</dbReference>
<dbReference type="NCBIfam" id="TIGR01335">
    <property type="entry name" value="psaA"/>
    <property type="match status" value="1"/>
</dbReference>
<dbReference type="PANTHER" id="PTHR30128">
    <property type="entry name" value="OUTER MEMBRANE PROTEIN, OMPA-RELATED"/>
    <property type="match status" value="1"/>
</dbReference>
<dbReference type="PANTHER" id="PTHR30128:SF19">
    <property type="entry name" value="PHOTOSYSTEM I P700 CHLOROPHYLL A APOPROTEIN A1-RELATED"/>
    <property type="match status" value="1"/>
</dbReference>
<dbReference type="Pfam" id="PF00223">
    <property type="entry name" value="PsaA_PsaB"/>
    <property type="match status" value="1"/>
</dbReference>
<dbReference type="PIRSF" id="PIRSF002905">
    <property type="entry name" value="PSI_A"/>
    <property type="match status" value="1"/>
</dbReference>
<dbReference type="PRINTS" id="PR00257">
    <property type="entry name" value="PHOTSYSPSAAB"/>
</dbReference>
<dbReference type="SUPFAM" id="SSF81558">
    <property type="entry name" value="Photosystem I subunits PsaA/PsaB"/>
    <property type="match status" value="1"/>
</dbReference>
<dbReference type="PROSITE" id="PS00419">
    <property type="entry name" value="PHOTOSYSTEM_I_PSAAB"/>
    <property type="match status" value="1"/>
</dbReference>
<comment type="function">
    <text>PsaA and PsaB bind P700, the primary electron donor of photosystem I (PSI), as well as the electron acceptors A0, A1 and FX. PSI is a plastocyanin-ferredoxin oxidoreductase, converting photonic excitation into a charge separation, which transfers an electron from the donor P700 chlorophyll pair to the spectroscopically characterized acceptors A0, A1, FX, FA and FB in turn. Oxidized P700 is reduced on the lumenal side of the thylakoid membrane by plastocyanin.</text>
</comment>
<comment type="catalytic activity">
    <reaction evidence="1">
        <text>reduced [plastocyanin] + hnu + oxidized [2Fe-2S]-[ferredoxin] = oxidized [plastocyanin] + reduced [2Fe-2S]-[ferredoxin]</text>
        <dbReference type="Rhea" id="RHEA:30407"/>
        <dbReference type="Rhea" id="RHEA-COMP:10000"/>
        <dbReference type="Rhea" id="RHEA-COMP:10001"/>
        <dbReference type="Rhea" id="RHEA-COMP:10039"/>
        <dbReference type="Rhea" id="RHEA-COMP:10040"/>
        <dbReference type="ChEBI" id="CHEBI:29036"/>
        <dbReference type="ChEBI" id="CHEBI:30212"/>
        <dbReference type="ChEBI" id="CHEBI:33737"/>
        <dbReference type="ChEBI" id="CHEBI:33738"/>
        <dbReference type="ChEBI" id="CHEBI:49552"/>
        <dbReference type="EC" id="1.97.1.12"/>
    </reaction>
</comment>
<comment type="cofactor">
    <text evidence="1">P700 is a chlorophyll a/chlorophyll a' dimer, A0 is one or more chlorophyll a, A1 is one or both phylloquinones and FX is a shared 4Fe-4S iron-sulfur center.</text>
</comment>
<comment type="subunit">
    <text evidence="1">The PsaA/B heterodimer binds the P700 chlorophyll special pair and subsequent electron acceptors. PSI consists of a core antenna complex that captures photons, and an electron transfer chain that converts photonic excitation into a charge separation. The eukaryotic PSI reaction center is composed of at least 11 subunits.</text>
</comment>
<comment type="subcellular location">
    <subcellularLocation>
        <location evidence="1">Plastid</location>
        <location evidence="1">Chloroplast thylakoid membrane</location>
        <topology evidence="1">Multi-pass membrane protein</topology>
    </subcellularLocation>
</comment>
<comment type="similarity">
    <text evidence="1">Belongs to the PsaA/PsaB family.</text>
</comment>
<gene>
    <name evidence="1" type="primary">psaA</name>
</gene>
<geneLocation type="chloroplast"/>
<organism>
    <name type="scientific">Encephalartos lebomboensis</name>
    <name type="common">Lebombo cycad</name>
    <dbReference type="NCBI Taxonomy" id="58035"/>
    <lineage>
        <taxon>Eukaryota</taxon>
        <taxon>Viridiplantae</taxon>
        <taxon>Streptophyta</taxon>
        <taxon>Embryophyta</taxon>
        <taxon>Tracheophyta</taxon>
        <taxon>Spermatophyta</taxon>
        <taxon>Cycadidae</taxon>
        <taxon>Cycadales</taxon>
        <taxon>Zamiaceae</taxon>
        <taxon>Encephalartos</taxon>
    </lineage>
</organism>
<keyword id="KW-0004">4Fe-4S</keyword>
<keyword id="KW-0148">Chlorophyll</keyword>
<keyword id="KW-0150">Chloroplast</keyword>
<keyword id="KW-0157">Chromophore</keyword>
<keyword id="KW-0249">Electron transport</keyword>
<keyword id="KW-0408">Iron</keyword>
<keyword id="KW-0411">Iron-sulfur</keyword>
<keyword id="KW-0460">Magnesium</keyword>
<keyword id="KW-0472">Membrane</keyword>
<keyword id="KW-0479">Metal-binding</keyword>
<keyword id="KW-0560">Oxidoreductase</keyword>
<keyword id="KW-0602">Photosynthesis</keyword>
<keyword id="KW-0603">Photosystem I</keyword>
<keyword id="KW-0934">Plastid</keyword>
<keyword id="KW-0793">Thylakoid</keyword>
<keyword id="KW-0812">Transmembrane</keyword>
<keyword id="KW-1133">Transmembrane helix</keyword>
<keyword id="KW-0813">Transport</keyword>
<proteinExistence type="inferred from homology"/>
<evidence type="ECO:0000255" key="1">
    <source>
        <dbReference type="HAMAP-Rule" id="MF_00458"/>
    </source>
</evidence>
<name>PSAA_ENCLE</name>
<protein>
    <recommendedName>
        <fullName evidence="1">Photosystem I P700 chlorophyll a apoprotein A1</fullName>
        <ecNumber evidence="1">1.97.1.12</ecNumber>
    </recommendedName>
    <alternativeName>
        <fullName evidence="1">PSI-A</fullName>
    </alternativeName>
    <alternativeName>
        <fullName evidence="1">PsaA</fullName>
    </alternativeName>
</protein>
<accession>Q9MUK4</accession>
<reference key="1">
    <citation type="journal article" date="2000" name="Mol. Biol. Evol.">
        <title>Error, bias, and long-branch attraction in data for two chloroplast photosystem genes in seed plants.</title>
        <authorList>
            <person name="Sanderson M.J."/>
            <person name="Wojciechowski M.F."/>
            <person name="Hu J.-M."/>
            <person name="Sher Khan T."/>
            <person name="Brady S.G."/>
        </authorList>
    </citation>
    <scope>NUCLEOTIDE SEQUENCE [GENOMIC DNA]</scope>
</reference>
<feature type="chain" id="PRO_0000088546" description="Photosystem I P700 chlorophyll a apoprotein A1">
    <location>
        <begin position="1" status="less than"/>
        <end position="719" status="greater than"/>
    </location>
</feature>
<feature type="transmembrane region" description="Helical; Name=I" evidence="1">
    <location>
        <begin position="59"/>
        <end position="82"/>
    </location>
</feature>
<feature type="transmembrane region" description="Helical; Name=II" evidence="1">
    <location>
        <begin position="145"/>
        <end position="168"/>
    </location>
</feature>
<feature type="transmembrane region" description="Helical; Name=III" evidence="1">
    <location>
        <begin position="184"/>
        <end position="208"/>
    </location>
</feature>
<feature type="transmembrane region" description="Helical; Name=IV" evidence="1">
    <location>
        <begin position="280"/>
        <end position="298"/>
    </location>
</feature>
<feature type="transmembrane region" description="Helical; Name=V" evidence="1">
    <location>
        <begin position="335"/>
        <end position="358"/>
    </location>
</feature>
<feature type="transmembrane region" description="Helical; Name=VI" evidence="1">
    <location>
        <begin position="374"/>
        <end position="400"/>
    </location>
</feature>
<feature type="transmembrane region" description="Helical; Name=VII" evidence="1">
    <location>
        <begin position="422"/>
        <end position="444"/>
    </location>
</feature>
<feature type="transmembrane region" description="Helical; Name=VIII" evidence="1">
    <location>
        <begin position="520"/>
        <end position="538"/>
    </location>
</feature>
<feature type="transmembrane region" description="Helical; Name=IX" evidence="1">
    <location>
        <begin position="578"/>
        <end position="599"/>
    </location>
</feature>
<feature type="transmembrane region" description="Helical; Name=X" evidence="1">
    <location>
        <begin position="653"/>
        <end position="675"/>
    </location>
</feature>
<feature type="transmembrane region" description="Helical; Name=XI" evidence="1">
    <location>
        <begin position="713"/>
        <end position="719" status="greater than"/>
    </location>
</feature>
<feature type="binding site" evidence="1">
    <location>
        <position position="562"/>
    </location>
    <ligand>
        <name>[4Fe-4S] cluster</name>
        <dbReference type="ChEBI" id="CHEBI:49883"/>
        <note>ligand shared between dimeric partners</note>
    </ligand>
</feature>
<feature type="binding site" evidence="1">
    <location>
        <position position="571"/>
    </location>
    <ligand>
        <name>[4Fe-4S] cluster</name>
        <dbReference type="ChEBI" id="CHEBI:49883"/>
        <note>ligand shared between dimeric partners</note>
    </ligand>
</feature>
<feature type="binding site" description="axial binding residue" evidence="1">
    <location>
        <position position="664"/>
    </location>
    <ligand>
        <name>chlorophyll a'</name>
        <dbReference type="ChEBI" id="CHEBI:189419"/>
        <label>A1</label>
    </ligand>
    <ligandPart>
        <name>Mg</name>
        <dbReference type="ChEBI" id="CHEBI:25107"/>
    </ligandPart>
</feature>
<feature type="binding site" description="axial binding residue" evidence="1">
    <location>
        <position position="672"/>
    </location>
    <ligand>
        <name>chlorophyll a</name>
        <dbReference type="ChEBI" id="CHEBI:58416"/>
        <label>A3</label>
    </ligand>
    <ligandPart>
        <name>Mg</name>
        <dbReference type="ChEBI" id="CHEBI:25107"/>
    </ligandPart>
</feature>
<feature type="binding site" evidence="1">
    <location>
        <position position="680"/>
    </location>
    <ligand>
        <name>chlorophyll a</name>
        <dbReference type="ChEBI" id="CHEBI:58416"/>
        <label>A3</label>
    </ligand>
</feature>
<feature type="binding site" evidence="1">
    <location>
        <position position="681"/>
    </location>
    <ligand>
        <name>phylloquinone</name>
        <dbReference type="ChEBI" id="CHEBI:18067"/>
        <label>A</label>
    </ligand>
</feature>
<feature type="non-terminal residue">
    <location>
        <position position="1"/>
    </location>
</feature>
<feature type="non-terminal residue">
    <location>
        <position position="719"/>
    </location>
</feature>
<sequence>IVVERDPIRTSFEKWAKPGHFSRTLAKGPNTTTWIWNLHADAHDFGSHTNDLEEISRKVFSAHFGQLAIIFIWLSGMYFHGARFSNYEAWLSDPTHIKPSAQVVWPIVGQEILNGDVGGGSRGIQITSGLFQLWRASGITSELQLYCTAIGALIFAALMLFAGWFHYHKAAPKLAWFQDVESMLNHHLAGLLGIGSLSWAGHQVHVSLPINQLLDAGVDPKEIPLPHEFILNRDLLAQLYPSFAEGLTPLFTLNWSEYSEFLTFRGGLNPVTGGLWLTDTAHHHLAIAILFLIAGHMYRTNWGIGHSLKEILEAHKGPFTGEGHKGLYEILTTSWHAQLALNLAMLGSLTIVVAHHMYSMPPYPYLAIDYGTQLSLFTHHMWIGGFLIVGAAAHAAIFMVRDYDPTTQYNNLLDRVLRHRDAIVSHLNWACIFLGFHSFGLYIHNDTMSALGRPQDMFSDTAIQLQPIFAQWVQNTHALAPGSTAPDATASTSVTWGGGDLVAVGGKVALLPIPLGTADFLVHHIHAFTIHVTVLILLKGVLFARSSRLIPDKANLGFRFPCDGPGRGGTCQVSAWDHVFLGLFWMYNAISVVIFHFSWKMQSDVWGSISDQGMVTHITGGNFAQSSITINGWLRDFLWAQASQVIQSYGSSLSAYGLLFLGAHFVWAFSLMFLFSGRGYWQELIESIVWAHNKLEVAPVIQPRALSIVQGRAVGVAHY</sequence>